<organism>
    <name type="scientific">Rhododendron tomentosum</name>
    <name type="common">Marsh Labrador tea</name>
    <name type="synonym">Ledum palustre</name>
    <dbReference type="NCBI Taxonomy" id="49170"/>
    <lineage>
        <taxon>Eukaryota</taxon>
        <taxon>Viridiplantae</taxon>
        <taxon>Streptophyta</taxon>
        <taxon>Embryophyta</taxon>
        <taxon>Tracheophyta</taxon>
        <taxon>Spermatophyta</taxon>
        <taxon>Magnoliopsida</taxon>
        <taxon>eudicotyledons</taxon>
        <taxon>Gunneridae</taxon>
        <taxon>Pentapetalae</taxon>
        <taxon>asterids</taxon>
        <taxon>Ericales</taxon>
        <taxon>Ericaceae</taxon>
        <taxon>Ericoideae</taxon>
        <taxon>Rhodoreae</taxon>
        <taxon>Rhododendron</taxon>
    </lineage>
</organism>
<reference key="1">
    <citation type="journal article" date="1998" name="Shokubutsu Kenkyu Zasshi">
        <title>Investigation of sectional relationships in the genus Rhododendron (Ericaceae) based on matK sequences.</title>
        <authorList>
            <person name="Kurashige Y."/>
            <person name="Mine M."/>
            <person name="Kobayashi N."/>
            <person name="Handa T."/>
            <person name="Takayanagi K."/>
            <person name="Yukawa T."/>
        </authorList>
    </citation>
    <scope>NUCLEOTIDE SEQUENCE [GENOMIC DNA]</scope>
</reference>
<evidence type="ECO:0000255" key="1">
    <source>
        <dbReference type="HAMAP-Rule" id="MF_01390"/>
    </source>
</evidence>
<name>MATK_RHOTM</name>
<dbReference type="EMBL" id="AB012751">
    <property type="protein sequence ID" value="BAA25872.1"/>
    <property type="molecule type" value="Genomic_DNA"/>
</dbReference>
<dbReference type="GO" id="GO:0009507">
    <property type="term" value="C:chloroplast"/>
    <property type="evidence" value="ECO:0007669"/>
    <property type="project" value="UniProtKB-SubCell"/>
</dbReference>
<dbReference type="GO" id="GO:0003723">
    <property type="term" value="F:RNA binding"/>
    <property type="evidence" value="ECO:0007669"/>
    <property type="project" value="UniProtKB-KW"/>
</dbReference>
<dbReference type="GO" id="GO:0006397">
    <property type="term" value="P:mRNA processing"/>
    <property type="evidence" value="ECO:0007669"/>
    <property type="project" value="UniProtKB-KW"/>
</dbReference>
<dbReference type="GO" id="GO:0008380">
    <property type="term" value="P:RNA splicing"/>
    <property type="evidence" value="ECO:0007669"/>
    <property type="project" value="UniProtKB-UniRule"/>
</dbReference>
<dbReference type="GO" id="GO:0008033">
    <property type="term" value="P:tRNA processing"/>
    <property type="evidence" value="ECO:0007669"/>
    <property type="project" value="UniProtKB-KW"/>
</dbReference>
<dbReference type="HAMAP" id="MF_01390">
    <property type="entry name" value="MatK"/>
    <property type="match status" value="1"/>
</dbReference>
<dbReference type="InterPro" id="IPR024937">
    <property type="entry name" value="Domain_X"/>
</dbReference>
<dbReference type="InterPro" id="IPR002866">
    <property type="entry name" value="Maturase_MatK"/>
</dbReference>
<dbReference type="InterPro" id="IPR024942">
    <property type="entry name" value="Maturase_MatK_N"/>
</dbReference>
<dbReference type="PANTHER" id="PTHR34811">
    <property type="entry name" value="MATURASE K"/>
    <property type="match status" value="1"/>
</dbReference>
<dbReference type="PANTHER" id="PTHR34811:SF1">
    <property type="entry name" value="MATURASE K"/>
    <property type="match status" value="1"/>
</dbReference>
<dbReference type="Pfam" id="PF01348">
    <property type="entry name" value="Intron_maturas2"/>
    <property type="match status" value="1"/>
</dbReference>
<dbReference type="Pfam" id="PF01824">
    <property type="entry name" value="MatK_N"/>
    <property type="match status" value="1"/>
</dbReference>
<protein>
    <recommendedName>
        <fullName evidence="1">Maturase K</fullName>
    </recommendedName>
    <alternativeName>
        <fullName evidence="1">Intron maturase</fullName>
    </alternativeName>
</protein>
<keyword id="KW-0150">Chloroplast</keyword>
<keyword id="KW-0507">mRNA processing</keyword>
<keyword id="KW-0934">Plastid</keyword>
<keyword id="KW-0694">RNA-binding</keyword>
<keyword id="KW-0819">tRNA processing</keyword>
<sequence length="506" mass="60412">MEEFKRNLELDRSQQHDFIYPLIFQEYIYALAHDRGLNRSIFLENTGYDNKSSLLIVKRLITHLITQMYQQNRFLFSGNDSNQKKFFGDNTNLYSQMIFEGFAVVVEIPFYLRLLSFLEGKERVKSHNLRSIHSIFPFLEDKFSHLVYVLDILISHPIHLEIVVQTLRYWVKDASSLHLLRFFLHEYPIWNSLITPKKSSFSFSIRNQRFFLFLYNFHVCEYESIFVFLRNQSSHLRSISSETFLERISFYRKIELEVFAKDFKAILWVFKEPFLHYVRYRGKAILASKGTSLLMNKWKYYLVNFWQCYFYMWSQPRRIHINQLSNHSLDFLGYLSTVRLKPLMVRSQMIENSFLIENASKKFDTLMPITPMIGSLSKAKFCNVLGHPMSKPVWAALSDSDIIERFGRIYRNLSHYYSGSLKKMSLYRIKYILRLSCARTLARKHKSTVRAFLKRLGVGLLEEFFTEEEQVFYLTFAKASSNSGELYRRRVWYLDIICINDLANYE</sequence>
<accession>O62992</accession>
<gene>
    <name evidence="1" type="primary">matK</name>
</gene>
<proteinExistence type="inferred from homology"/>
<comment type="function">
    <text evidence="1">Usually encoded in the trnK tRNA gene intron. Probably assists in splicing its own and other chloroplast group II introns.</text>
</comment>
<comment type="subcellular location">
    <subcellularLocation>
        <location>Plastid</location>
        <location>Chloroplast</location>
    </subcellularLocation>
</comment>
<comment type="similarity">
    <text evidence="1">Belongs to the intron maturase 2 family. MatK subfamily.</text>
</comment>
<geneLocation type="chloroplast"/>
<feature type="chain" id="PRO_0000143462" description="Maturase K">
    <location>
        <begin position="1"/>
        <end position="506"/>
    </location>
</feature>